<evidence type="ECO:0000255" key="1">
    <source>
        <dbReference type="HAMAP-Rule" id="MF_01685"/>
    </source>
</evidence>
<reference key="1">
    <citation type="journal article" date="2006" name="J. Bacteriol.">
        <title>Pathogenomic sequence analysis of Bacillus cereus and Bacillus thuringiensis isolates closely related to Bacillus anthracis.</title>
        <authorList>
            <person name="Han C.S."/>
            <person name="Xie G."/>
            <person name="Challacombe J.F."/>
            <person name="Altherr M.R."/>
            <person name="Bhotika S.S."/>
            <person name="Bruce D."/>
            <person name="Campbell C.S."/>
            <person name="Campbell M.L."/>
            <person name="Chen J."/>
            <person name="Chertkov O."/>
            <person name="Cleland C."/>
            <person name="Dimitrijevic M."/>
            <person name="Doggett N.A."/>
            <person name="Fawcett J.J."/>
            <person name="Glavina T."/>
            <person name="Goodwin L.A."/>
            <person name="Hill K.K."/>
            <person name="Hitchcock P."/>
            <person name="Jackson P.J."/>
            <person name="Keim P."/>
            <person name="Kewalramani A.R."/>
            <person name="Longmire J."/>
            <person name="Lucas S."/>
            <person name="Malfatti S."/>
            <person name="McMurry K."/>
            <person name="Meincke L.J."/>
            <person name="Misra M."/>
            <person name="Moseman B.L."/>
            <person name="Mundt M."/>
            <person name="Munk A.C."/>
            <person name="Okinaka R.T."/>
            <person name="Parson-Quintana B."/>
            <person name="Reilly L.P."/>
            <person name="Richardson P."/>
            <person name="Robinson D.L."/>
            <person name="Rubin E."/>
            <person name="Saunders E."/>
            <person name="Tapia R."/>
            <person name="Tesmer J.G."/>
            <person name="Thayer N."/>
            <person name="Thompson L.S."/>
            <person name="Tice H."/>
            <person name="Ticknor L.O."/>
            <person name="Wills P.L."/>
            <person name="Brettin T.S."/>
            <person name="Gilna P."/>
        </authorList>
    </citation>
    <scope>NUCLEOTIDE SEQUENCE [LARGE SCALE GENOMIC DNA]</scope>
    <source>
        <strain>97-27</strain>
    </source>
</reference>
<accession>Q6HBX6</accession>
<proteinExistence type="inferred from homology"/>
<organism>
    <name type="scientific">Bacillus thuringiensis subsp. konkukian (strain 97-27)</name>
    <dbReference type="NCBI Taxonomy" id="281309"/>
    <lineage>
        <taxon>Bacteria</taxon>
        <taxon>Bacillati</taxon>
        <taxon>Bacillota</taxon>
        <taxon>Bacilli</taxon>
        <taxon>Bacillales</taxon>
        <taxon>Bacillaceae</taxon>
        <taxon>Bacillus</taxon>
        <taxon>Bacillus cereus group</taxon>
    </lineage>
</organism>
<sequence>MKVAENQKVYDITIIGGGPTGLFTAFYGGMRQASVKIIESLPQLGGQLSALYPEKYIYDVAGFPKVRAQELVDNLKEQMKKFDPTVCLEEAVDTLEKQADGIFKLVTNKQTHYSKSVIITAGNGAFQPRRLELEGTAKYEKKNLHYFVDDMNKFAGKRVVVFGGGDSAVDWTMMLEPIADKVTIVHRRDKFRAHEHSVESLMNSRAEVSTPYVPVELIGDDKIEQVVLQHVKTEEKIIIDVDDVIVNYGFVSSLGPIKNWGLDIQKNSILVNSKMETNIPGIYAAGDICTYEGKVKLIACGFGEAPTAVNNAKAYFDPNAKLQPMHSSSMF</sequence>
<feature type="chain" id="PRO_0000364805" description="Ferredoxin--NADP reductase 2">
    <location>
        <begin position="1"/>
        <end position="331"/>
    </location>
</feature>
<feature type="binding site" evidence="1">
    <location>
        <position position="20"/>
    </location>
    <ligand>
        <name>FAD</name>
        <dbReference type="ChEBI" id="CHEBI:57692"/>
    </ligand>
</feature>
<feature type="binding site" evidence="1">
    <location>
        <position position="39"/>
    </location>
    <ligand>
        <name>FAD</name>
        <dbReference type="ChEBI" id="CHEBI:57692"/>
    </ligand>
</feature>
<feature type="binding site" evidence="1">
    <location>
        <position position="47"/>
    </location>
    <ligand>
        <name>FAD</name>
        <dbReference type="ChEBI" id="CHEBI:57692"/>
    </ligand>
</feature>
<feature type="binding site" evidence="1">
    <location>
        <position position="52"/>
    </location>
    <ligand>
        <name>FAD</name>
        <dbReference type="ChEBI" id="CHEBI:57692"/>
    </ligand>
</feature>
<feature type="binding site" evidence="1">
    <location>
        <position position="92"/>
    </location>
    <ligand>
        <name>FAD</name>
        <dbReference type="ChEBI" id="CHEBI:57692"/>
    </ligand>
</feature>
<feature type="binding site" evidence="1">
    <location>
        <position position="126"/>
    </location>
    <ligand>
        <name>FAD</name>
        <dbReference type="ChEBI" id="CHEBI:57692"/>
    </ligand>
</feature>
<feature type="binding site" evidence="1">
    <location>
        <position position="287"/>
    </location>
    <ligand>
        <name>FAD</name>
        <dbReference type="ChEBI" id="CHEBI:57692"/>
    </ligand>
</feature>
<feature type="binding site" evidence="1">
    <location>
        <position position="328"/>
    </location>
    <ligand>
        <name>FAD</name>
        <dbReference type="ChEBI" id="CHEBI:57692"/>
    </ligand>
</feature>
<keyword id="KW-0274">FAD</keyword>
<keyword id="KW-0285">Flavoprotein</keyword>
<keyword id="KW-0521">NADP</keyword>
<keyword id="KW-0560">Oxidoreductase</keyword>
<protein>
    <recommendedName>
        <fullName evidence="1">Ferredoxin--NADP reductase 2</fullName>
        <shortName evidence="1">FNR 2</shortName>
        <shortName evidence="1">Fd-NADP(+) reductase 2</shortName>
        <ecNumber evidence="1">1.18.1.2</ecNumber>
    </recommendedName>
</protein>
<dbReference type="EC" id="1.18.1.2" evidence="1"/>
<dbReference type="EMBL" id="AE017355">
    <property type="protein sequence ID" value="AAT63212.1"/>
    <property type="molecule type" value="Genomic_DNA"/>
</dbReference>
<dbReference type="RefSeq" id="YP_038950.1">
    <property type="nucleotide sequence ID" value="NC_005957.1"/>
</dbReference>
<dbReference type="SMR" id="Q6HBX6"/>
<dbReference type="KEGG" id="btk:BT9727_4639"/>
<dbReference type="PATRIC" id="fig|281309.8.peg.4937"/>
<dbReference type="HOGENOM" id="CLU_031864_5_5_9"/>
<dbReference type="Proteomes" id="UP000001301">
    <property type="component" value="Chromosome"/>
</dbReference>
<dbReference type="GO" id="GO:0004324">
    <property type="term" value="F:ferredoxin-NADP+ reductase activity"/>
    <property type="evidence" value="ECO:0007669"/>
    <property type="project" value="UniProtKB-UniRule"/>
</dbReference>
<dbReference type="GO" id="GO:0050660">
    <property type="term" value="F:flavin adenine dinucleotide binding"/>
    <property type="evidence" value="ECO:0007669"/>
    <property type="project" value="UniProtKB-UniRule"/>
</dbReference>
<dbReference type="GO" id="GO:0050661">
    <property type="term" value="F:NADP binding"/>
    <property type="evidence" value="ECO:0007669"/>
    <property type="project" value="UniProtKB-UniRule"/>
</dbReference>
<dbReference type="Gene3D" id="3.50.50.60">
    <property type="entry name" value="FAD/NAD(P)-binding domain"/>
    <property type="match status" value="2"/>
</dbReference>
<dbReference type="HAMAP" id="MF_01685">
    <property type="entry name" value="FENR2"/>
    <property type="match status" value="1"/>
</dbReference>
<dbReference type="InterPro" id="IPR036188">
    <property type="entry name" value="FAD/NAD-bd_sf"/>
</dbReference>
<dbReference type="InterPro" id="IPR023753">
    <property type="entry name" value="FAD/NAD-binding_dom"/>
</dbReference>
<dbReference type="InterPro" id="IPR022890">
    <property type="entry name" value="Fd--NADP_Rdtase_type_2"/>
</dbReference>
<dbReference type="InterPro" id="IPR050097">
    <property type="entry name" value="Ferredoxin-NADP_redctase_2"/>
</dbReference>
<dbReference type="PANTHER" id="PTHR48105">
    <property type="entry name" value="THIOREDOXIN REDUCTASE 1-RELATED-RELATED"/>
    <property type="match status" value="1"/>
</dbReference>
<dbReference type="Pfam" id="PF07992">
    <property type="entry name" value="Pyr_redox_2"/>
    <property type="match status" value="1"/>
</dbReference>
<dbReference type="PRINTS" id="PR00368">
    <property type="entry name" value="FADPNR"/>
</dbReference>
<dbReference type="PRINTS" id="PR00469">
    <property type="entry name" value="PNDRDTASEII"/>
</dbReference>
<dbReference type="SUPFAM" id="SSF51905">
    <property type="entry name" value="FAD/NAD(P)-binding domain"/>
    <property type="match status" value="1"/>
</dbReference>
<comment type="catalytic activity">
    <reaction evidence="1">
        <text>2 reduced [2Fe-2S]-[ferredoxin] + NADP(+) + H(+) = 2 oxidized [2Fe-2S]-[ferredoxin] + NADPH</text>
        <dbReference type="Rhea" id="RHEA:20125"/>
        <dbReference type="Rhea" id="RHEA-COMP:10000"/>
        <dbReference type="Rhea" id="RHEA-COMP:10001"/>
        <dbReference type="ChEBI" id="CHEBI:15378"/>
        <dbReference type="ChEBI" id="CHEBI:33737"/>
        <dbReference type="ChEBI" id="CHEBI:33738"/>
        <dbReference type="ChEBI" id="CHEBI:57783"/>
        <dbReference type="ChEBI" id="CHEBI:58349"/>
        <dbReference type="EC" id="1.18.1.2"/>
    </reaction>
</comment>
<comment type="cofactor">
    <cofactor evidence="1">
        <name>FAD</name>
        <dbReference type="ChEBI" id="CHEBI:57692"/>
    </cofactor>
    <text evidence="1">Binds 1 FAD per subunit.</text>
</comment>
<comment type="subunit">
    <text evidence="1">Homodimer.</text>
</comment>
<comment type="similarity">
    <text evidence="1">Belongs to the ferredoxin--NADP reductase type 2 family.</text>
</comment>
<name>FENR2_BACHK</name>
<gene>
    <name type="ordered locus">BT9727_4639</name>
</gene>